<name>CLPX_HELPY</name>
<accession>O25926</accession>
<feature type="chain" id="PRO_0000160365" description="ATP-dependent Clp protease ATP-binding subunit ClpX">
    <location>
        <begin position="1"/>
        <end position="446"/>
    </location>
</feature>
<feature type="domain" description="ClpX-type ZB" evidence="2">
    <location>
        <begin position="1"/>
        <end position="55"/>
    </location>
</feature>
<feature type="binding site" evidence="2">
    <location>
        <position position="7"/>
    </location>
    <ligand>
        <name>Zn(2+)</name>
        <dbReference type="ChEBI" id="CHEBI:29105"/>
    </ligand>
</feature>
<feature type="binding site" evidence="2">
    <location>
        <position position="10"/>
    </location>
    <ligand>
        <name>Zn(2+)</name>
        <dbReference type="ChEBI" id="CHEBI:29105"/>
    </ligand>
</feature>
<feature type="binding site" evidence="2">
    <location>
        <position position="36"/>
    </location>
    <ligand>
        <name>Zn(2+)</name>
        <dbReference type="ChEBI" id="CHEBI:29105"/>
    </ligand>
</feature>
<feature type="binding site" evidence="2">
    <location>
        <position position="39"/>
    </location>
    <ligand>
        <name>Zn(2+)</name>
        <dbReference type="ChEBI" id="CHEBI:29105"/>
    </ligand>
</feature>
<feature type="binding site">
    <location>
        <begin position="150"/>
        <end position="157"/>
    </location>
    <ligand>
        <name>ATP</name>
        <dbReference type="ChEBI" id="CHEBI:30616"/>
    </ligand>
</feature>
<feature type="helix" evidence="4">
    <location>
        <begin position="82"/>
        <end position="90"/>
    </location>
</feature>
<feature type="helix" evidence="4">
    <location>
        <begin position="97"/>
        <end position="123"/>
    </location>
</feature>
<feature type="helix" evidence="4">
    <location>
        <begin position="126"/>
        <end position="137"/>
    </location>
</feature>
<feature type="strand" evidence="4">
    <location>
        <begin position="145"/>
        <end position="148"/>
    </location>
</feature>
<feature type="helix" evidence="4">
    <location>
        <begin position="155"/>
        <end position="165"/>
    </location>
</feature>
<feature type="strand" evidence="4">
    <location>
        <begin position="170"/>
        <end position="174"/>
    </location>
</feature>
<feature type="helix" evidence="4">
    <location>
        <begin position="175"/>
        <end position="177"/>
    </location>
</feature>
<feature type="helix" evidence="4">
    <location>
        <begin position="190"/>
        <end position="198"/>
    </location>
</feature>
<feature type="turn" evidence="4">
    <location>
        <begin position="199"/>
        <end position="201"/>
    </location>
</feature>
<feature type="helix" evidence="4">
    <location>
        <begin position="203"/>
        <end position="206"/>
    </location>
</feature>
<feature type="strand" evidence="4">
    <location>
        <begin position="209"/>
        <end position="214"/>
    </location>
</feature>
<feature type="helix" evidence="4">
    <location>
        <begin position="216"/>
        <end position="218"/>
    </location>
</feature>
<feature type="helix" evidence="4">
    <location>
        <begin position="235"/>
        <end position="246"/>
    </location>
</feature>
<feature type="strand" evidence="4">
    <location>
        <begin position="274"/>
        <end position="279"/>
    </location>
</feature>
<feature type="helix" evidence="4">
    <location>
        <begin position="284"/>
        <end position="287"/>
    </location>
</feature>
<feature type="turn" evidence="4">
    <location>
        <begin position="288"/>
        <end position="290"/>
    </location>
</feature>
<feature type="turn" evidence="4">
    <location>
        <begin position="306"/>
        <end position="311"/>
    </location>
</feature>
<feature type="helix" evidence="4">
    <location>
        <begin position="313"/>
        <end position="315"/>
    </location>
</feature>
<feature type="helix" evidence="4">
    <location>
        <begin position="318"/>
        <end position="323"/>
    </location>
</feature>
<feature type="helix" evidence="4">
    <location>
        <begin position="328"/>
        <end position="331"/>
    </location>
</feature>
<feature type="strand" evidence="4">
    <location>
        <begin position="336"/>
        <end position="339"/>
    </location>
</feature>
<feature type="helix" evidence="4">
    <location>
        <begin position="345"/>
        <end position="353"/>
    </location>
</feature>
<feature type="helix" evidence="4">
    <location>
        <begin position="359"/>
        <end position="368"/>
    </location>
</feature>
<feature type="turn" evidence="4">
    <location>
        <begin position="369"/>
        <end position="371"/>
    </location>
</feature>
<feature type="strand" evidence="4">
    <location>
        <begin position="373"/>
        <end position="376"/>
    </location>
</feature>
<feature type="helix" evidence="4">
    <location>
        <begin position="378"/>
        <end position="390"/>
    </location>
</feature>
<feature type="helix" evidence="4">
    <location>
        <begin position="395"/>
        <end position="397"/>
    </location>
</feature>
<feature type="helix" evidence="4">
    <location>
        <begin position="398"/>
        <end position="411"/>
    </location>
</feature>
<feature type="helix" evidence="4">
    <location>
        <begin position="413"/>
        <end position="416"/>
    </location>
</feature>
<feature type="strand" evidence="4">
    <location>
        <begin position="419"/>
        <end position="423"/>
    </location>
</feature>
<feature type="helix" evidence="4">
    <location>
        <begin position="425"/>
        <end position="428"/>
    </location>
</feature>
<feature type="strand" evidence="4">
    <location>
        <begin position="435"/>
        <end position="437"/>
    </location>
</feature>
<protein>
    <recommendedName>
        <fullName evidence="1">ATP-dependent Clp protease ATP-binding subunit ClpX</fullName>
    </recommendedName>
</protein>
<sequence>MNETLYCSFCKKPESRDPKKRRIIFASNLNKDVCVCEYCIDVMHGELHKYDNSLLALKRDRLRRMESSAYEEEFLLSYIPAPKELKAVLDNYVIGQEQAKKVFSVAVYNHYKRLSFKEKLKKQDNQDSNVELEHLEEVELSKSNILLIGPTGSGKTLMAQTLAKHLDIPIAISDATSLTEAGYVGEDVENILTRLLQASDWNVQKAQKGIVFIDEIDKISRLSENRSITRDVSGEGVQQALLKIVEGSLVNIPPKGGRKHPEGNFIQIDTSDILFICAGAFDGLAEIIKKRTTQNVLGFTQEKMSKKEQEAILHLVQTHDLVTYGLIPELIGRLPVLSTLDSISLEAMVDILQKPKNALIKQYQQLFKMDEVDLIFEEEAIKEIAQLALERKTGARGLRAIIEDFCLDIMFDLPKLKGSEVRITKDCVLKQAEPLIIAKTHSKILP</sequence>
<reference key="1">
    <citation type="journal article" date="1997" name="Nature">
        <title>The complete genome sequence of the gastric pathogen Helicobacter pylori.</title>
        <authorList>
            <person name="Tomb J.-F."/>
            <person name="White O."/>
            <person name="Kerlavage A.R."/>
            <person name="Clayton R.A."/>
            <person name="Sutton G.G."/>
            <person name="Fleischmann R.D."/>
            <person name="Ketchum K.A."/>
            <person name="Klenk H.-P."/>
            <person name="Gill S.R."/>
            <person name="Dougherty B.A."/>
            <person name="Nelson K.E."/>
            <person name="Quackenbush J."/>
            <person name="Zhou L."/>
            <person name="Kirkness E.F."/>
            <person name="Peterson S.N."/>
            <person name="Loftus B.J."/>
            <person name="Richardson D.L."/>
            <person name="Dodson R.J."/>
            <person name="Khalak H.G."/>
            <person name="Glodek A."/>
            <person name="McKenney K."/>
            <person name="FitzGerald L.M."/>
            <person name="Lee N."/>
            <person name="Adams M.D."/>
            <person name="Hickey E.K."/>
            <person name="Berg D.E."/>
            <person name="Gocayne J.D."/>
            <person name="Utterback T.R."/>
            <person name="Peterson J.D."/>
            <person name="Kelley J.M."/>
            <person name="Cotton M.D."/>
            <person name="Weidman J.F."/>
            <person name="Fujii C."/>
            <person name="Bowman C."/>
            <person name="Watthey L."/>
            <person name="Wallin E."/>
            <person name="Hayes W.S."/>
            <person name="Borodovsky M."/>
            <person name="Karp P.D."/>
            <person name="Smith H.O."/>
            <person name="Fraser C.M."/>
            <person name="Venter J.C."/>
        </authorList>
    </citation>
    <scope>NUCLEOTIDE SEQUENCE [LARGE SCALE GENOMIC DNA]</scope>
    <source>
        <strain>ATCC 700392 / 26695</strain>
    </source>
</reference>
<reference key="2">
    <citation type="submission" date="1997-03" db="EMBL/GenBank/DDBJ databases">
        <authorList>
            <person name="Perez-Casal J.F."/>
            <person name="O'Toole P.W."/>
            <person name="Trust T.J."/>
        </authorList>
    </citation>
    <scope>NUCLEOTIDE SEQUENCE [GENOMIC DNA] OF 431-446</scope>
    <source>
        <strain>ATCC 43504 / NCTC 11637 / JCM 7653 / RPH 13487</strain>
    </source>
</reference>
<reference key="3">
    <citation type="journal article" date="2003" name="J. Biol. Chem.">
        <title>Crystal structure of ClpX molecular chaperone from Helicobacter pylori.</title>
        <authorList>
            <person name="Kim D.Y."/>
            <person name="Kim K.K."/>
        </authorList>
    </citation>
    <scope>X-RAY CRYSTALLOGRAPHY (2.60 ANGSTROMS) OF 71-446 IN COMPLEX WITH ADP</scope>
    <scope>SUBUNIT</scope>
</reference>
<dbReference type="EMBL" id="AE000511">
    <property type="protein sequence ID" value="AAD08417.1"/>
    <property type="molecule type" value="Genomic_DNA"/>
</dbReference>
<dbReference type="EMBL" id="U95641">
    <property type="protein sequence ID" value="AAC04557.1"/>
    <property type="molecule type" value="Genomic_DNA"/>
</dbReference>
<dbReference type="PIR" id="F64691">
    <property type="entry name" value="F64691"/>
</dbReference>
<dbReference type="RefSeq" id="NP_208165.1">
    <property type="nucleotide sequence ID" value="NC_000915.1"/>
</dbReference>
<dbReference type="RefSeq" id="WP_001006287.1">
    <property type="nucleotide sequence ID" value="NC_018939.1"/>
</dbReference>
<dbReference type="PDB" id="1UM8">
    <property type="method" value="X-ray"/>
    <property type="resolution" value="2.60 A"/>
    <property type="chains" value="A=71-446"/>
</dbReference>
<dbReference type="PDBsum" id="1UM8"/>
<dbReference type="SMR" id="O25926"/>
<dbReference type="DIP" id="DIP-3286N"/>
<dbReference type="FunCoup" id="O25926">
    <property type="interactions" value="278"/>
</dbReference>
<dbReference type="IntAct" id="O25926">
    <property type="interactions" value="5"/>
</dbReference>
<dbReference type="MINT" id="O25926"/>
<dbReference type="STRING" id="85962.HP_1374"/>
<dbReference type="DrugBank" id="DB09275">
    <property type="generic name" value="Bismuth subcitrate potassium"/>
</dbReference>
<dbReference type="PaxDb" id="85962-C694_07090"/>
<dbReference type="EnsemblBacteria" id="AAD08417">
    <property type="protein sequence ID" value="AAD08417"/>
    <property type="gene ID" value="HP_1374"/>
</dbReference>
<dbReference type="KEGG" id="heo:C694_07090"/>
<dbReference type="KEGG" id="hpy:HP_1374"/>
<dbReference type="PATRIC" id="fig|85962.47.peg.1471"/>
<dbReference type="eggNOG" id="COG1219">
    <property type="taxonomic scope" value="Bacteria"/>
</dbReference>
<dbReference type="InParanoid" id="O25926"/>
<dbReference type="OrthoDB" id="9804062at2"/>
<dbReference type="PhylomeDB" id="O25926"/>
<dbReference type="EvolutionaryTrace" id="O25926"/>
<dbReference type="Proteomes" id="UP000000429">
    <property type="component" value="Chromosome"/>
</dbReference>
<dbReference type="GO" id="GO:0009376">
    <property type="term" value="C:HslUV protease complex"/>
    <property type="evidence" value="ECO:0000318"/>
    <property type="project" value="GO_Central"/>
</dbReference>
<dbReference type="GO" id="GO:0005524">
    <property type="term" value="F:ATP binding"/>
    <property type="evidence" value="ECO:0000318"/>
    <property type="project" value="GO_Central"/>
</dbReference>
<dbReference type="GO" id="GO:0016887">
    <property type="term" value="F:ATP hydrolysis activity"/>
    <property type="evidence" value="ECO:0000318"/>
    <property type="project" value="GO_Central"/>
</dbReference>
<dbReference type="GO" id="GO:0140662">
    <property type="term" value="F:ATP-dependent protein folding chaperone"/>
    <property type="evidence" value="ECO:0007669"/>
    <property type="project" value="InterPro"/>
</dbReference>
<dbReference type="GO" id="GO:0046983">
    <property type="term" value="F:protein dimerization activity"/>
    <property type="evidence" value="ECO:0007669"/>
    <property type="project" value="InterPro"/>
</dbReference>
<dbReference type="GO" id="GO:0051082">
    <property type="term" value="F:unfolded protein binding"/>
    <property type="evidence" value="ECO:0007669"/>
    <property type="project" value="UniProtKB-UniRule"/>
</dbReference>
<dbReference type="GO" id="GO:0008270">
    <property type="term" value="F:zinc ion binding"/>
    <property type="evidence" value="ECO:0007669"/>
    <property type="project" value="InterPro"/>
</dbReference>
<dbReference type="GO" id="GO:0051301">
    <property type="term" value="P:cell division"/>
    <property type="evidence" value="ECO:0000318"/>
    <property type="project" value="GO_Central"/>
</dbReference>
<dbReference type="GO" id="GO:0051603">
    <property type="term" value="P:proteolysis involved in protein catabolic process"/>
    <property type="evidence" value="ECO:0000318"/>
    <property type="project" value="GO_Central"/>
</dbReference>
<dbReference type="CDD" id="cd19497">
    <property type="entry name" value="RecA-like_ClpX"/>
    <property type="match status" value="1"/>
</dbReference>
<dbReference type="FunFam" id="1.10.8.60:FF:000269">
    <property type="entry name" value="ATP-dependent Clp protease ATP-binding subunit ClpX"/>
    <property type="match status" value="1"/>
</dbReference>
<dbReference type="FunFam" id="3.40.50.300:FF:001911">
    <property type="entry name" value="ATP-dependent Clp protease ATP-binding subunit ClpX"/>
    <property type="match status" value="1"/>
</dbReference>
<dbReference type="Gene3D" id="1.10.8.60">
    <property type="match status" value="1"/>
</dbReference>
<dbReference type="Gene3D" id="3.40.50.300">
    <property type="entry name" value="P-loop containing nucleotide triphosphate hydrolases"/>
    <property type="match status" value="1"/>
</dbReference>
<dbReference type="HAMAP" id="MF_00175">
    <property type="entry name" value="ClpX"/>
    <property type="match status" value="1"/>
</dbReference>
<dbReference type="InterPro" id="IPR003593">
    <property type="entry name" value="AAA+_ATPase"/>
</dbReference>
<dbReference type="InterPro" id="IPR050052">
    <property type="entry name" value="ATP-dep_Clp_protease_ClpX"/>
</dbReference>
<dbReference type="InterPro" id="IPR003959">
    <property type="entry name" value="ATPase_AAA_core"/>
</dbReference>
<dbReference type="InterPro" id="IPR019489">
    <property type="entry name" value="Clp_ATPase_C"/>
</dbReference>
<dbReference type="InterPro" id="IPR004487">
    <property type="entry name" value="Clp_protease_ATP-bd_su_ClpX"/>
</dbReference>
<dbReference type="InterPro" id="IPR046425">
    <property type="entry name" value="ClpX_bact"/>
</dbReference>
<dbReference type="InterPro" id="IPR027417">
    <property type="entry name" value="P-loop_NTPase"/>
</dbReference>
<dbReference type="InterPro" id="IPR010603">
    <property type="entry name" value="Znf_CppX_C4"/>
</dbReference>
<dbReference type="NCBIfam" id="TIGR00382">
    <property type="entry name" value="clpX"/>
    <property type="match status" value="1"/>
</dbReference>
<dbReference type="NCBIfam" id="NF003745">
    <property type="entry name" value="PRK05342.1"/>
    <property type="match status" value="1"/>
</dbReference>
<dbReference type="PANTHER" id="PTHR48102:SF7">
    <property type="entry name" value="ATP-DEPENDENT CLP PROTEASE ATP-BINDING SUBUNIT CLPX-LIKE, MITOCHONDRIAL"/>
    <property type="match status" value="1"/>
</dbReference>
<dbReference type="PANTHER" id="PTHR48102">
    <property type="entry name" value="ATP-DEPENDENT CLP PROTEASE ATP-BINDING SUBUNIT CLPX-LIKE, MITOCHONDRIAL-RELATED"/>
    <property type="match status" value="1"/>
</dbReference>
<dbReference type="Pfam" id="PF07724">
    <property type="entry name" value="AAA_2"/>
    <property type="match status" value="1"/>
</dbReference>
<dbReference type="Pfam" id="PF10431">
    <property type="entry name" value="ClpB_D2-small"/>
    <property type="match status" value="1"/>
</dbReference>
<dbReference type="SMART" id="SM00382">
    <property type="entry name" value="AAA"/>
    <property type="match status" value="1"/>
</dbReference>
<dbReference type="SMART" id="SM01086">
    <property type="entry name" value="ClpB_D2-small"/>
    <property type="match status" value="1"/>
</dbReference>
<dbReference type="SMART" id="SM00994">
    <property type="entry name" value="zf-C4_ClpX"/>
    <property type="match status" value="1"/>
</dbReference>
<dbReference type="SUPFAM" id="SSF52540">
    <property type="entry name" value="P-loop containing nucleoside triphosphate hydrolases"/>
    <property type="match status" value="1"/>
</dbReference>
<dbReference type="PROSITE" id="PS51902">
    <property type="entry name" value="CLPX_ZB"/>
    <property type="match status" value="1"/>
</dbReference>
<proteinExistence type="evidence at protein level"/>
<evidence type="ECO:0000255" key="1">
    <source>
        <dbReference type="HAMAP-Rule" id="MF_00175"/>
    </source>
</evidence>
<evidence type="ECO:0000255" key="2">
    <source>
        <dbReference type="PROSITE-ProRule" id="PRU01250"/>
    </source>
</evidence>
<evidence type="ECO:0000269" key="3">
    <source>
    </source>
</evidence>
<evidence type="ECO:0007829" key="4">
    <source>
        <dbReference type="PDB" id="1UM8"/>
    </source>
</evidence>
<keyword id="KW-0002">3D-structure</keyword>
<keyword id="KW-0067">ATP-binding</keyword>
<keyword id="KW-0143">Chaperone</keyword>
<keyword id="KW-0479">Metal-binding</keyword>
<keyword id="KW-0547">Nucleotide-binding</keyword>
<keyword id="KW-1185">Reference proteome</keyword>
<keyword id="KW-0862">Zinc</keyword>
<comment type="function">
    <text evidence="1">ATP-dependent specificity component of the Clp protease. It directs the protease to specific substrates. Can perform chaperone functions in the absence of ClpP.</text>
</comment>
<comment type="subunit">
    <text evidence="1 3">Component of the ClpX-ClpP complex. Forms a hexameric ring that, in the presence of ATP, binds to fourteen ClpP subunits assembled into a disk-like structure with a central cavity, resembling the structure of eukaryotic proteasomes.</text>
</comment>
<comment type="similarity">
    <text evidence="1">Belongs to the ClpX chaperone family.</text>
</comment>
<organism>
    <name type="scientific">Helicobacter pylori (strain ATCC 700392 / 26695)</name>
    <name type="common">Campylobacter pylori</name>
    <dbReference type="NCBI Taxonomy" id="85962"/>
    <lineage>
        <taxon>Bacteria</taxon>
        <taxon>Pseudomonadati</taxon>
        <taxon>Campylobacterota</taxon>
        <taxon>Epsilonproteobacteria</taxon>
        <taxon>Campylobacterales</taxon>
        <taxon>Helicobacteraceae</taxon>
        <taxon>Helicobacter</taxon>
    </lineage>
</organism>
<gene>
    <name evidence="1" type="primary">clpX</name>
    <name type="ordered locus">HP_1374</name>
</gene>